<evidence type="ECO:0000250" key="1">
    <source>
        <dbReference type="UniProtKB" id="C7EXK4"/>
    </source>
</evidence>
<evidence type="ECO:0000250" key="2">
    <source>
        <dbReference type="UniProtKB" id="G0S196"/>
    </source>
</evidence>
<evidence type="ECO:0000250" key="3">
    <source>
        <dbReference type="UniProtKB" id="P04191"/>
    </source>
</evidence>
<evidence type="ECO:0000250" key="4">
    <source>
        <dbReference type="UniProtKB" id="P32660"/>
    </source>
</evidence>
<evidence type="ECO:0000250" key="5">
    <source>
        <dbReference type="UniProtKB" id="P39524"/>
    </source>
</evidence>
<evidence type="ECO:0000250" key="6">
    <source>
        <dbReference type="UniProtKB" id="Q8NB49"/>
    </source>
</evidence>
<evidence type="ECO:0000250" key="7">
    <source>
        <dbReference type="UniProtKB" id="Q9Y2Q0"/>
    </source>
</evidence>
<evidence type="ECO:0000255" key="8"/>
<evidence type="ECO:0000256" key="9">
    <source>
        <dbReference type="SAM" id="MobiDB-lite"/>
    </source>
</evidence>
<evidence type="ECO:0000269" key="10">
    <source>
    </source>
</evidence>
<evidence type="ECO:0000305" key="11"/>
<evidence type="ECO:0000312" key="12">
    <source>
        <dbReference type="PomBase" id="SPAC4F10.16c"/>
    </source>
</evidence>
<proteinExistence type="inferred from homology"/>
<gene>
    <name evidence="12" type="ORF">SPAC4F10.16c</name>
</gene>
<name>ATCZ_SCHPO</name>
<accession>O36028</accession>
<sequence>MPSLINFDAISSLKSSLHGLSICAFNHLHHVPQHNGSLAHEGPTNQTDYSSRHHESQFSQEAHAEQRSRDDEEANSFEGSCNNSDQSWTSRVTSKKNEAGTESGDASVRRIYVTSIPEEHRHLPSQWFPSNKIRTTKYTPVSFIPKNLWNQFKNIANAFFLFVTLLQCIPLFCPEHLGLSFIPLSVILLTTAIKDGIEDYRRCVLDKKFNNTLTWKLVGFNNANALGEHIGLWRKLKKFISHTVADMSYCLKNSGISSGLATLTVDNISHRHSLESDSAFTLSSVSQDSLEIHEIGNSGPSNSFSVIQEQSTGSSNAKFERVCRKSLLVGDIVKVLADEAIPADLLILSTENSNGVCYVETKNLDGETNLKDKYALCSTKCCKSEYRCSAASFWVECEQPHADLYSLNGVVKAPGAVQSPSESTNGRKIHEEPFSISNVLLCGCTLRNSKWVIGLVLYTGSETRIQKNRGLTPSKRSRITRDLNWTIILNFLLLFAMCLFSGVLRSIYSAQNNSARVFELSKNSNTAPAHGIISIFTSLILFQNLVPISLYITMDIVRSIQSYFIFSDREMYDEKLDCPCSPKSWNISDDLGQIEYIFSDKTGTLTQNIMSFKKCSINGIRYGKSHNEDTCIKKRRNLNYNENLSCKVDLDKKKMLETLSLSDSPNPESITFISSKFVDHLQSNENYIQTEACFEFFKALALCHSVVTDVQDETLIYNAQSPDEEALVKVARDFGFTLLNTKNRRYTIRIRGENKNFRVLDIIPFTSTRKRMSVIIRDEDGIIHLICKGADTVIFPRLSSGQNNIIEKTKKHLASFSSEGFRTLCIARRTIDKQDYLEWKVNFNEANSAIHERNEKVSKVSEMIEQELELLGGTAIEDKLQENVPETIALLAIAGIKLWVLTGDKVETAINIGYSCNLLDPNMTIFRIDANSFGALEEVEAFIRNTLCFNFGYMGTDEEFRFLLKDHSPPSPKHAIVIDGDALNFVLSEQVSFLFLMLCKQCKTVLCCRVSPSQKAAVVALVKKSLNVVTLAIGDGANDVSMIQEADVGVGIKGVEGQAASMSADYAIGQFSFLGRLLLVHGRWDYKRMSQMISFFFYKNVIWTFILFWYQFYNEFDGNYIFDYTYVMLFNLLFTSLPVIIAGCFDQDVDASVSMKNPSLYQRGILGLEWNGKRFWSYMLDGIYQSLVCFGVALFVFKFGDFVSWTGRNIECIEDIGLFISSPTIFVINIFILMNQERLNLISLITWMFSIGVFWIWTFIYSEVGPSYAFHKSASRTCQTFGFWCVTVLTIALCLLPRFSYICLQKLFYPRDIDLLRRRLCAKSDDETSSSSSFATDIEMCEQCNDPLSSKKNSGIVTSVSFDDSNK</sequence>
<dbReference type="EC" id="7.6.2.1"/>
<dbReference type="EMBL" id="CU329670">
    <property type="protein sequence ID" value="CAB11719.1"/>
    <property type="molecule type" value="Genomic_DNA"/>
</dbReference>
<dbReference type="PIR" id="T38820">
    <property type="entry name" value="T38820"/>
</dbReference>
<dbReference type="RefSeq" id="NP_594759.1">
    <property type="nucleotide sequence ID" value="NM_001020186.2"/>
</dbReference>
<dbReference type="SMR" id="O36028"/>
<dbReference type="BioGRID" id="279941">
    <property type="interactions" value="8"/>
</dbReference>
<dbReference type="FunCoup" id="O36028">
    <property type="interactions" value="66"/>
</dbReference>
<dbReference type="STRING" id="284812.O36028"/>
<dbReference type="iPTMnet" id="O36028"/>
<dbReference type="PaxDb" id="4896-SPAC4F10.16c.1"/>
<dbReference type="EnsemblFungi" id="SPAC4F10.16c.1">
    <property type="protein sequence ID" value="SPAC4F10.16c.1:pep"/>
    <property type="gene ID" value="SPAC4F10.16c"/>
</dbReference>
<dbReference type="KEGG" id="spo:2543523"/>
<dbReference type="PomBase" id="SPAC4F10.16c"/>
<dbReference type="VEuPathDB" id="FungiDB:SPAC4F10.16c"/>
<dbReference type="eggNOG" id="KOG0206">
    <property type="taxonomic scope" value="Eukaryota"/>
</dbReference>
<dbReference type="HOGENOM" id="CLU_000846_0_1_1"/>
<dbReference type="InParanoid" id="O36028"/>
<dbReference type="OMA" id="GSIIVWY"/>
<dbReference type="PhylomeDB" id="O36028"/>
<dbReference type="Reactome" id="R-SPO-936837">
    <property type="pathway name" value="Ion transport by P-type ATPases"/>
</dbReference>
<dbReference type="PRO" id="PR:O36028"/>
<dbReference type="Proteomes" id="UP000002485">
    <property type="component" value="Chromosome I"/>
</dbReference>
<dbReference type="GO" id="GO:0005783">
    <property type="term" value="C:endoplasmic reticulum"/>
    <property type="evidence" value="ECO:0007005"/>
    <property type="project" value="PomBase"/>
</dbReference>
<dbReference type="GO" id="GO:0005789">
    <property type="term" value="C:endoplasmic reticulum membrane"/>
    <property type="evidence" value="ECO:0007669"/>
    <property type="project" value="UniProtKB-SubCell"/>
</dbReference>
<dbReference type="GO" id="GO:1990531">
    <property type="term" value="C:phospholipid-translocating ATPase complex"/>
    <property type="evidence" value="ECO:0000266"/>
    <property type="project" value="PomBase"/>
</dbReference>
<dbReference type="GO" id="GO:0005886">
    <property type="term" value="C:plasma membrane"/>
    <property type="evidence" value="ECO:0000318"/>
    <property type="project" value="GO_Central"/>
</dbReference>
<dbReference type="GO" id="GO:0005524">
    <property type="term" value="F:ATP binding"/>
    <property type="evidence" value="ECO:0007669"/>
    <property type="project" value="UniProtKB-KW"/>
</dbReference>
<dbReference type="GO" id="GO:0016887">
    <property type="term" value="F:ATP hydrolysis activity"/>
    <property type="evidence" value="ECO:0007669"/>
    <property type="project" value="InterPro"/>
</dbReference>
<dbReference type="GO" id="GO:0140326">
    <property type="term" value="F:ATPase-coupled intramembrane lipid transporter activity"/>
    <property type="evidence" value="ECO:0000318"/>
    <property type="project" value="GO_Central"/>
</dbReference>
<dbReference type="GO" id="GO:0140351">
    <property type="term" value="F:glycosylceramide flippase activity"/>
    <property type="evidence" value="ECO:0000250"/>
    <property type="project" value="UniProtKB"/>
</dbReference>
<dbReference type="GO" id="GO:0000287">
    <property type="term" value="F:magnesium ion binding"/>
    <property type="evidence" value="ECO:0007669"/>
    <property type="project" value="InterPro"/>
</dbReference>
<dbReference type="GO" id="GO:0140345">
    <property type="term" value="F:phosphatidylcholine flippase activity"/>
    <property type="evidence" value="ECO:0000250"/>
    <property type="project" value="UniProtKB"/>
</dbReference>
<dbReference type="GO" id="GO:0090554">
    <property type="term" value="F:phosphatidylcholine floppase activity"/>
    <property type="evidence" value="ECO:0007669"/>
    <property type="project" value="RHEA"/>
</dbReference>
<dbReference type="GO" id="GO:0090555">
    <property type="term" value="F:phosphatidylethanolamine flippase activity"/>
    <property type="evidence" value="ECO:0000250"/>
    <property type="project" value="UniProtKB"/>
</dbReference>
<dbReference type="GO" id="GO:0090556">
    <property type="term" value="F:phosphatidylserine floppase activity"/>
    <property type="evidence" value="ECO:0007669"/>
    <property type="project" value="RHEA"/>
</dbReference>
<dbReference type="GO" id="GO:0045332">
    <property type="term" value="P:phospholipid translocation"/>
    <property type="evidence" value="ECO:0000250"/>
    <property type="project" value="UniProtKB"/>
</dbReference>
<dbReference type="CDD" id="cd02073">
    <property type="entry name" value="P-type_ATPase_APLT_Dnf-like"/>
    <property type="match status" value="1"/>
</dbReference>
<dbReference type="FunFam" id="3.40.50.1000:FF:000001">
    <property type="entry name" value="Phospholipid-transporting ATPase IC"/>
    <property type="match status" value="1"/>
</dbReference>
<dbReference type="FunFam" id="3.40.1110.10:FF:000358">
    <property type="entry name" value="Putative phospholipid-transporting ATPase C4F10.16c"/>
    <property type="match status" value="1"/>
</dbReference>
<dbReference type="Gene3D" id="3.40.1110.10">
    <property type="entry name" value="Calcium-transporting ATPase, cytoplasmic domain N"/>
    <property type="match status" value="1"/>
</dbReference>
<dbReference type="Gene3D" id="2.70.150.10">
    <property type="entry name" value="Calcium-transporting ATPase, cytoplasmic transduction domain A"/>
    <property type="match status" value="1"/>
</dbReference>
<dbReference type="Gene3D" id="3.40.50.1000">
    <property type="entry name" value="HAD superfamily/HAD-like"/>
    <property type="match status" value="1"/>
</dbReference>
<dbReference type="InterPro" id="IPR023299">
    <property type="entry name" value="ATPase_P-typ_cyto_dom_N"/>
</dbReference>
<dbReference type="InterPro" id="IPR018303">
    <property type="entry name" value="ATPase_P-typ_P_site"/>
</dbReference>
<dbReference type="InterPro" id="IPR023298">
    <property type="entry name" value="ATPase_P-typ_TM_dom_sf"/>
</dbReference>
<dbReference type="InterPro" id="IPR008250">
    <property type="entry name" value="ATPase_P-typ_transduc_dom_A_sf"/>
</dbReference>
<dbReference type="InterPro" id="IPR036412">
    <property type="entry name" value="HAD-like_sf"/>
</dbReference>
<dbReference type="InterPro" id="IPR023214">
    <property type="entry name" value="HAD_sf"/>
</dbReference>
<dbReference type="InterPro" id="IPR006539">
    <property type="entry name" value="P-type_ATPase_IV"/>
</dbReference>
<dbReference type="InterPro" id="IPR032631">
    <property type="entry name" value="P-type_ATPase_N"/>
</dbReference>
<dbReference type="InterPro" id="IPR001757">
    <property type="entry name" value="P_typ_ATPase"/>
</dbReference>
<dbReference type="InterPro" id="IPR032630">
    <property type="entry name" value="P_typ_ATPase_c"/>
</dbReference>
<dbReference type="InterPro" id="IPR044492">
    <property type="entry name" value="P_typ_ATPase_HD_dom"/>
</dbReference>
<dbReference type="NCBIfam" id="TIGR01652">
    <property type="entry name" value="ATPase-Plipid"/>
    <property type="match status" value="1"/>
</dbReference>
<dbReference type="NCBIfam" id="TIGR01494">
    <property type="entry name" value="ATPase_P-type"/>
    <property type="match status" value="1"/>
</dbReference>
<dbReference type="PANTHER" id="PTHR24092:SF206">
    <property type="entry name" value="PHOSPHOLIPID-TRANSPORTING ATPASE C4F10.16C"/>
    <property type="match status" value="1"/>
</dbReference>
<dbReference type="PANTHER" id="PTHR24092">
    <property type="entry name" value="PROBABLE PHOSPHOLIPID-TRANSPORTING ATPASE"/>
    <property type="match status" value="1"/>
</dbReference>
<dbReference type="Pfam" id="PF13246">
    <property type="entry name" value="Cation_ATPase"/>
    <property type="match status" value="1"/>
</dbReference>
<dbReference type="Pfam" id="PF16212">
    <property type="entry name" value="PhoLip_ATPase_C"/>
    <property type="match status" value="1"/>
</dbReference>
<dbReference type="Pfam" id="PF16209">
    <property type="entry name" value="PhoLip_ATPase_N"/>
    <property type="match status" value="1"/>
</dbReference>
<dbReference type="PRINTS" id="PR00119">
    <property type="entry name" value="CATATPASE"/>
</dbReference>
<dbReference type="SFLD" id="SFLDG00002">
    <property type="entry name" value="C1.7:_P-type_atpase_like"/>
    <property type="match status" value="1"/>
</dbReference>
<dbReference type="SFLD" id="SFLDF00027">
    <property type="entry name" value="p-type_atpase"/>
    <property type="match status" value="1"/>
</dbReference>
<dbReference type="SUPFAM" id="SSF81653">
    <property type="entry name" value="Calcium ATPase, transduction domain A"/>
    <property type="match status" value="1"/>
</dbReference>
<dbReference type="SUPFAM" id="SSF81665">
    <property type="entry name" value="Calcium ATPase, transmembrane domain M"/>
    <property type="match status" value="1"/>
</dbReference>
<dbReference type="SUPFAM" id="SSF56784">
    <property type="entry name" value="HAD-like"/>
    <property type="match status" value="1"/>
</dbReference>
<dbReference type="SUPFAM" id="SSF81660">
    <property type="entry name" value="Metal cation-transporting ATPase, ATP-binding domain N"/>
    <property type="match status" value="1"/>
</dbReference>
<dbReference type="PROSITE" id="PS00154">
    <property type="entry name" value="ATPASE_E1_E2"/>
    <property type="match status" value="1"/>
</dbReference>
<keyword id="KW-0067">ATP-binding</keyword>
<keyword id="KW-1003">Cell membrane</keyword>
<keyword id="KW-0256">Endoplasmic reticulum</keyword>
<keyword id="KW-0445">Lipid transport</keyword>
<keyword id="KW-0460">Magnesium</keyword>
<keyword id="KW-0472">Membrane</keyword>
<keyword id="KW-0479">Metal-binding</keyword>
<keyword id="KW-0547">Nucleotide-binding</keyword>
<keyword id="KW-0597">Phosphoprotein</keyword>
<keyword id="KW-1185">Reference proteome</keyword>
<keyword id="KW-1278">Translocase</keyword>
<keyword id="KW-0812">Transmembrane</keyword>
<keyword id="KW-1133">Transmembrane helix</keyword>
<keyword id="KW-0813">Transport</keyword>
<comment type="function">
    <text evidence="4">Catalytic component of a P4-ATPase flippase complex which catalyzes the hydrolysis of ATP coupled to the transport of glucosylceramide, phosphatidylcholine, phosphatidylethanolamine, and small amounts of phosphatidylserine from the lumenal to the cytosolic leaflet of the cell membrane and ensures the maintenance of asymmetric distribution of phospholipids.</text>
</comment>
<comment type="catalytic activity">
    <reaction evidence="4">
        <text>ATP + H2O + phospholipidSide 1 = ADP + phosphate + phospholipidSide 2.</text>
        <dbReference type="EC" id="7.6.2.1"/>
    </reaction>
</comment>
<comment type="catalytic activity">
    <reaction evidence="4">
        <text>a 1,2-diacyl-sn-glycero-3-phosphoethanolamine(out) + ATP + H2O = a 1,2-diacyl-sn-glycero-3-phosphoethanolamine(in) + ADP + phosphate + H(+)</text>
        <dbReference type="Rhea" id="RHEA:66132"/>
        <dbReference type="ChEBI" id="CHEBI:15377"/>
        <dbReference type="ChEBI" id="CHEBI:15378"/>
        <dbReference type="ChEBI" id="CHEBI:30616"/>
        <dbReference type="ChEBI" id="CHEBI:43474"/>
        <dbReference type="ChEBI" id="CHEBI:64612"/>
        <dbReference type="ChEBI" id="CHEBI:456216"/>
    </reaction>
    <physiologicalReaction direction="left-to-right" evidence="4">
        <dbReference type="Rhea" id="RHEA:66133"/>
    </physiologicalReaction>
</comment>
<comment type="catalytic activity">
    <reaction evidence="4">
        <text>a 1,2-diacyl-sn-glycero-3-phosphocholine(out) + ATP + H2O = a 1,2-diacyl-sn-glycero-3-phosphocholine(in) + ADP + phosphate + H(+)</text>
        <dbReference type="Rhea" id="RHEA:38583"/>
        <dbReference type="ChEBI" id="CHEBI:15377"/>
        <dbReference type="ChEBI" id="CHEBI:15378"/>
        <dbReference type="ChEBI" id="CHEBI:30616"/>
        <dbReference type="ChEBI" id="CHEBI:43474"/>
        <dbReference type="ChEBI" id="CHEBI:57643"/>
        <dbReference type="ChEBI" id="CHEBI:456216"/>
    </reaction>
    <physiologicalReaction direction="left-to-right" evidence="4">
        <dbReference type="Rhea" id="RHEA:38584"/>
    </physiologicalReaction>
</comment>
<comment type="catalytic activity">
    <reaction evidence="4">
        <text>a beta-D-glucosyl-(1&lt;-&gt;1')-N-acylsphing-4-enine(out) + ATP + H2O = a beta-D-glucosyl-(1&lt;-&gt;1')-N-acylsphing-4-enine(in) + ADP + phosphate + H(+)</text>
        <dbReference type="Rhea" id="RHEA:66036"/>
        <dbReference type="ChEBI" id="CHEBI:15377"/>
        <dbReference type="ChEBI" id="CHEBI:15378"/>
        <dbReference type="ChEBI" id="CHEBI:22801"/>
        <dbReference type="ChEBI" id="CHEBI:30616"/>
        <dbReference type="ChEBI" id="CHEBI:43474"/>
        <dbReference type="ChEBI" id="CHEBI:456216"/>
    </reaction>
    <physiologicalReaction direction="left-to-right" evidence="4">
        <dbReference type="Rhea" id="RHEA:66037"/>
    </physiologicalReaction>
</comment>
<comment type="catalytic activity">
    <reaction evidence="4">
        <text>a 1,2-diacyl-sn-glycero-3-phospho-L-serine(out) + ATP + H2O = a 1,2-diacyl-sn-glycero-3-phospho-L-serine(in) + ADP + phosphate + H(+)</text>
        <dbReference type="Rhea" id="RHEA:38567"/>
        <dbReference type="ChEBI" id="CHEBI:15377"/>
        <dbReference type="ChEBI" id="CHEBI:15378"/>
        <dbReference type="ChEBI" id="CHEBI:30616"/>
        <dbReference type="ChEBI" id="CHEBI:43474"/>
        <dbReference type="ChEBI" id="CHEBI:57262"/>
        <dbReference type="ChEBI" id="CHEBI:456216"/>
    </reaction>
    <physiologicalReaction direction="left-to-right" evidence="4">
        <dbReference type="Rhea" id="RHEA:38568"/>
    </physiologicalReaction>
</comment>
<comment type="cofactor">
    <cofactor evidence="5">
        <name>Mg(2+)</name>
        <dbReference type="ChEBI" id="CHEBI:18420"/>
    </cofactor>
</comment>
<comment type="subcellular location">
    <subcellularLocation>
        <location evidence="4">Cell membrane</location>
        <topology evidence="8">Multi-pass membrane protein</topology>
    </subcellularLocation>
    <subcellularLocation>
        <location evidence="10">Endoplasmic reticulum membrane</location>
        <topology evidence="8">Multi-pass membrane protein</topology>
    </subcellularLocation>
</comment>
<comment type="similarity">
    <text evidence="11">Belongs to the cation transport ATPase (P-type) (TC 3.A.3) family. Type IV subfamily.</text>
</comment>
<organism>
    <name type="scientific">Schizosaccharomyces pombe (strain 972 / ATCC 24843)</name>
    <name type="common">Fission yeast</name>
    <dbReference type="NCBI Taxonomy" id="284812"/>
    <lineage>
        <taxon>Eukaryota</taxon>
        <taxon>Fungi</taxon>
        <taxon>Dikarya</taxon>
        <taxon>Ascomycota</taxon>
        <taxon>Taphrinomycotina</taxon>
        <taxon>Schizosaccharomycetes</taxon>
        <taxon>Schizosaccharomycetales</taxon>
        <taxon>Schizosaccharomycetaceae</taxon>
        <taxon>Schizosaccharomyces</taxon>
    </lineage>
</organism>
<protein>
    <recommendedName>
        <fullName evidence="11">Phospholipid-transporting ATPase C4F10.16c</fullName>
        <ecNumber>7.6.2.1</ecNumber>
    </recommendedName>
</protein>
<feature type="chain" id="PRO_0000343137" description="Phospholipid-transporting ATPase C4F10.16c">
    <location>
        <begin position="1"/>
        <end position="1367"/>
    </location>
</feature>
<feature type="topological domain" description="Cytoplasmic" evidence="8">
    <location>
        <begin position="1"/>
        <end position="154"/>
    </location>
</feature>
<feature type="transmembrane region" description="Helical" evidence="8">
    <location>
        <begin position="155"/>
        <end position="172"/>
    </location>
</feature>
<feature type="topological domain" description="Lumenal" evidence="8">
    <location>
        <begin position="173"/>
        <end position="177"/>
    </location>
</feature>
<feature type="transmembrane region" description="Helical" evidence="8">
    <location>
        <begin position="178"/>
        <end position="197"/>
    </location>
</feature>
<feature type="topological domain" description="Cytoplasmic" evidence="8">
    <location>
        <begin position="198"/>
        <end position="482"/>
    </location>
</feature>
<feature type="transmembrane region" description="Helical" evidence="8">
    <location>
        <begin position="483"/>
        <end position="503"/>
    </location>
</feature>
<feature type="topological domain" description="Lumenal" evidence="8">
    <location>
        <begin position="504"/>
        <end position="531"/>
    </location>
</feature>
<feature type="transmembrane region" description="Helical" evidence="8">
    <location>
        <begin position="532"/>
        <end position="552"/>
    </location>
</feature>
<feature type="topological domain" description="Cytoplasmic" evidence="8">
    <location>
        <begin position="553"/>
        <end position="1091"/>
    </location>
</feature>
<feature type="transmembrane region" description="Helical" evidence="8">
    <location>
        <begin position="1092"/>
        <end position="1112"/>
    </location>
</feature>
<feature type="topological domain" description="Lumenal" evidence="8">
    <location>
        <begin position="1113"/>
        <end position="1124"/>
    </location>
</feature>
<feature type="transmembrane region" description="Helical" evidence="8">
    <location>
        <begin position="1125"/>
        <end position="1145"/>
    </location>
</feature>
<feature type="topological domain" description="Cytoplasmic" evidence="8">
    <location>
        <begin position="1146"/>
        <end position="1174"/>
    </location>
</feature>
<feature type="transmembrane region" description="Helical" evidence="8">
    <location>
        <begin position="1175"/>
        <end position="1197"/>
    </location>
</feature>
<feature type="topological domain" description="Lumenal" evidence="8">
    <location>
        <begin position="1198"/>
        <end position="1212"/>
    </location>
</feature>
<feature type="transmembrane region" description="Helical" evidence="8">
    <location>
        <begin position="1213"/>
        <end position="1233"/>
    </location>
</feature>
<feature type="topological domain" description="Cytoplasmic" evidence="8">
    <location>
        <begin position="1234"/>
        <end position="1240"/>
    </location>
</feature>
<feature type="transmembrane region" description="Helical" evidence="8">
    <location>
        <begin position="1241"/>
        <end position="1261"/>
    </location>
</feature>
<feature type="topological domain" description="Lumenal" evidence="8">
    <location>
        <begin position="1262"/>
        <end position="1276"/>
    </location>
</feature>
<feature type="transmembrane region" description="Helical" evidence="8">
    <location>
        <begin position="1277"/>
        <end position="1297"/>
    </location>
</feature>
<feature type="topological domain" description="Cytoplasmic" evidence="8">
    <location>
        <begin position="1298"/>
        <end position="1367"/>
    </location>
</feature>
<feature type="region of interest" description="Disordered" evidence="9">
    <location>
        <begin position="34"/>
        <end position="104"/>
    </location>
</feature>
<feature type="compositionally biased region" description="Basic and acidic residues" evidence="9">
    <location>
        <begin position="50"/>
        <end position="70"/>
    </location>
</feature>
<feature type="compositionally biased region" description="Polar residues" evidence="9">
    <location>
        <begin position="77"/>
        <end position="92"/>
    </location>
</feature>
<feature type="active site" description="4-aspartylphosphate intermediate" evidence="7">
    <location>
        <position position="600"/>
    </location>
</feature>
<feature type="binding site" evidence="7">
    <location>
        <position position="600"/>
    </location>
    <ligand>
        <name>ATP</name>
        <dbReference type="ChEBI" id="CHEBI:30616"/>
    </ligand>
</feature>
<feature type="binding site" evidence="7">
    <location>
        <position position="600"/>
    </location>
    <ligand>
        <name>Mg(2+)</name>
        <dbReference type="ChEBI" id="CHEBI:18420"/>
    </ligand>
</feature>
<feature type="binding site" evidence="7">
    <location>
        <position position="601"/>
    </location>
    <ligand>
        <name>ATP</name>
        <dbReference type="ChEBI" id="CHEBI:30616"/>
    </ligand>
</feature>
<feature type="binding site" evidence="5">
    <location>
        <position position="602"/>
    </location>
    <ligand>
        <name>ATP</name>
        <dbReference type="ChEBI" id="CHEBI:30616"/>
    </ligand>
</feature>
<feature type="binding site" evidence="7">
    <location>
        <position position="602"/>
    </location>
    <ligand>
        <name>Mg(2+)</name>
        <dbReference type="ChEBI" id="CHEBI:18420"/>
    </ligand>
</feature>
<feature type="binding site" evidence="3">
    <location>
        <position position="724"/>
    </location>
    <ligand>
        <name>ATP</name>
        <dbReference type="ChEBI" id="CHEBI:30616"/>
    </ligand>
</feature>
<feature type="binding site" evidence="7">
    <location>
        <position position="765"/>
    </location>
    <ligand>
        <name>ATP</name>
        <dbReference type="ChEBI" id="CHEBI:30616"/>
    </ligand>
</feature>
<feature type="binding site" evidence="4">
    <location>
        <position position="767"/>
    </location>
    <ligand>
        <name>ATP</name>
        <dbReference type="ChEBI" id="CHEBI:30616"/>
    </ligand>
</feature>
<feature type="binding site" evidence="5">
    <location>
        <position position="770"/>
    </location>
    <ligand>
        <name>ATP</name>
        <dbReference type="ChEBI" id="CHEBI:30616"/>
    </ligand>
</feature>
<feature type="binding site" evidence="3">
    <location>
        <position position="788"/>
    </location>
    <ligand>
        <name>ATP</name>
        <dbReference type="ChEBI" id="CHEBI:30616"/>
    </ligand>
</feature>
<feature type="binding site" evidence="3">
    <location>
        <position position="822"/>
    </location>
    <ligand>
        <name>ATP</name>
        <dbReference type="ChEBI" id="CHEBI:30616"/>
    </ligand>
</feature>
<feature type="binding site" evidence="5">
    <location>
        <position position="823"/>
    </location>
    <ligand>
        <name>ATP</name>
        <dbReference type="ChEBI" id="CHEBI:30616"/>
    </ligand>
</feature>
<feature type="binding site" evidence="3">
    <location>
        <position position="902"/>
    </location>
    <ligand>
        <name>ATP</name>
        <dbReference type="ChEBI" id="CHEBI:30616"/>
    </ligand>
</feature>
<feature type="binding site" evidence="3">
    <location>
        <position position="903"/>
    </location>
    <ligand>
        <name>ATP</name>
        <dbReference type="ChEBI" id="CHEBI:30616"/>
    </ligand>
</feature>
<feature type="binding site" evidence="3">
    <location>
        <position position="904"/>
    </location>
    <ligand>
        <name>ATP</name>
        <dbReference type="ChEBI" id="CHEBI:30616"/>
    </ligand>
</feature>
<feature type="binding site" evidence="3">
    <location>
        <position position="1009"/>
    </location>
    <ligand>
        <name>ATP</name>
        <dbReference type="ChEBI" id="CHEBI:30616"/>
    </ligand>
</feature>
<feature type="binding site" evidence="3">
    <location>
        <position position="1015"/>
    </location>
    <ligand>
        <name>ATP</name>
        <dbReference type="ChEBI" id="CHEBI:30616"/>
    </ligand>
</feature>
<feature type="binding site" evidence="7">
    <location>
        <position position="1035"/>
    </location>
    <ligand>
        <name>Mg(2+)</name>
        <dbReference type="ChEBI" id="CHEBI:18420"/>
    </ligand>
</feature>
<feature type="binding site" evidence="7">
    <location>
        <position position="1038"/>
    </location>
    <ligand>
        <name>ATP</name>
        <dbReference type="ChEBI" id="CHEBI:30616"/>
    </ligand>
</feature>
<feature type="binding site" evidence="3">
    <location>
        <position position="1039"/>
    </location>
    <ligand>
        <name>ATP</name>
        <dbReference type="ChEBI" id="CHEBI:30616"/>
    </ligand>
</feature>
<feature type="binding site" evidence="6">
    <location>
        <position position="1039"/>
    </location>
    <ligand>
        <name>Mg(2+)</name>
        <dbReference type="ChEBI" id="CHEBI:18420"/>
    </ligand>
</feature>
<feature type="binding site" evidence="2">
    <location>
        <position position="1298"/>
    </location>
    <ligand>
        <name>a 1,2-diacyl-sn-glycero-3-phospho-L-serine</name>
        <dbReference type="ChEBI" id="CHEBI:57262"/>
    </ligand>
</feature>
<feature type="site" description="Involved in the release of the transported lipid into the cytosolic leaflet" evidence="1">
    <location>
        <position position="548"/>
    </location>
</feature>
<reference key="1">
    <citation type="journal article" date="2002" name="Nature">
        <title>The genome sequence of Schizosaccharomyces pombe.</title>
        <authorList>
            <person name="Wood V."/>
            <person name="Gwilliam R."/>
            <person name="Rajandream M.A."/>
            <person name="Lyne M.H."/>
            <person name="Lyne R."/>
            <person name="Stewart A."/>
            <person name="Sgouros J.G."/>
            <person name="Peat N."/>
            <person name="Hayles J."/>
            <person name="Baker S.G."/>
            <person name="Basham D."/>
            <person name="Bowman S."/>
            <person name="Brooks K."/>
            <person name="Brown D."/>
            <person name="Brown S."/>
            <person name="Chillingworth T."/>
            <person name="Churcher C.M."/>
            <person name="Collins M."/>
            <person name="Connor R."/>
            <person name="Cronin A."/>
            <person name="Davis P."/>
            <person name="Feltwell T."/>
            <person name="Fraser A."/>
            <person name="Gentles S."/>
            <person name="Goble A."/>
            <person name="Hamlin N."/>
            <person name="Harris D.E."/>
            <person name="Hidalgo J."/>
            <person name="Hodgson G."/>
            <person name="Holroyd S."/>
            <person name="Hornsby T."/>
            <person name="Howarth S."/>
            <person name="Huckle E.J."/>
            <person name="Hunt S."/>
            <person name="Jagels K."/>
            <person name="James K.D."/>
            <person name="Jones L."/>
            <person name="Jones M."/>
            <person name="Leather S."/>
            <person name="McDonald S."/>
            <person name="McLean J."/>
            <person name="Mooney P."/>
            <person name="Moule S."/>
            <person name="Mungall K.L."/>
            <person name="Murphy L.D."/>
            <person name="Niblett D."/>
            <person name="Odell C."/>
            <person name="Oliver K."/>
            <person name="O'Neil S."/>
            <person name="Pearson D."/>
            <person name="Quail M.A."/>
            <person name="Rabbinowitsch E."/>
            <person name="Rutherford K.M."/>
            <person name="Rutter S."/>
            <person name="Saunders D."/>
            <person name="Seeger K."/>
            <person name="Sharp S."/>
            <person name="Skelton J."/>
            <person name="Simmonds M.N."/>
            <person name="Squares R."/>
            <person name="Squares S."/>
            <person name="Stevens K."/>
            <person name="Taylor K."/>
            <person name="Taylor R.G."/>
            <person name="Tivey A."/>
            <person name="Walsh S.V."/>
            <person name="Warren T."/>
            <person name="Whitehead S."/>
            <person name="Woodward J.R."/>
            <person name="Volckaert G."/>
            <person name="Aert R."/>
            <person name="Robben J."/>
            <person name="Grymonprez B."/>
            <person name="Weltjens I."/>
            <person name="Vanstreels E."/>
            <person name="Rieger M."/>
            <person name="Schaefer M."/>
            <person name="Mueller-Auer S."/>
            <person name="Gabel C."/>
            <person name="Fuchs M."/>
            <person name="Duesterhoeft A."/>
            <person name="Fritzc C."/>
            <person name="Holzer E."/>
            <person name="Moestl D."/>
            <person name="Hilbert H."/>
            <person name="Borzym K."/>
            <person name="Langer I."/>
            <person name="Beck A."/>
            <person name="Lehrach H."/>
            <person name="Reinhardt R."/>
            <person name="Pohl T.M."/>
            <person name="Eger P."/>
            <person name="Zimmermann W."/>
            <person name="Wedler H."/>
            <person name="Wambutt R."/>
            <person name="Purnelle B."/>
            <person name="Goffeau A."/>
            <person name="Cadieu E."/>
            <person name="Dreano S."/>
            <person name="Gloux S."/>
            <person name="Lelaure V."/>
            <person name="Mottier S."/>
            <person name="Galibert F."/>
            <person name="Aves S.J."/>
            <person name="Xiang Z."/>
            <person name="Hunt C."/>
            <person name="Moore K."/>
            <person name="Hurst S.M."/>
            <person name="Lucas M."/>
            <person name="Rochet M."/>
            <person name="Gaillardin C."/>
            <person name="Tallada V.A."/>
            <person name="Garzon A."/>
            <person name="Thode G."/>
            <person name="Daga R.R."/>
            <person name="Cruzado L."/>
            <person name="Jimenez J."/>
            <person name="Sanchez M."/>
            <person name="del Rey F."/>
            <person name="Benito J."/>
            <person name="Dominguez A."/>
            <person name="Revuelta J.L."/>
            <person name="Moreno S."/>
            <person name="Armstrong J."/>
            <person name="Forsburg S.L."/>
            <person name="Cerutti L."/>
            <person name="Lowe T."/>
            <person name="McCombie W.R."/>
            <person name="Paulsen I."/>
            <person name="Potashkin J."/>
            <person name="Shpakovski G.V."/>
            <person name="Ussery D."/>
            <person name="Barrell B.G."/>
            <person name="Nurse P."/>
        </authorList>
    </citation>
    <scope>NUCLEOTIDE SEQUENCE [LARGE SCALE GENOMIC DNA]</scope>
    <source>
        <strain>972 / ATCC 24843</strain>
    </source>
</reference>
<reference key="2">
    <citation type="journal article" date="2006" name="Nat. Biotechnol.">
        <title>ORFeome cloning and global analysis of protein localization in the fission yeast Schizosaccharomyces pombe.</title>
        <authorList>
            <person name="Matsuyama A."/>
            <person name="Arai R."/>
            <person name="Yashiroda Y."/>
            <person name="Shirai A."/>
            <person name="Kamata A."/>
            <person name="Sekido S."/>
            <person name="Kobayashi Y."/>
            <person name="Hashimoto A."/>
            <person name="Hamamoto M."/>
            <person name="Hiraoka Y."/>
            <person name="Horinouchi S."/>
            <person name="Yoshida M."/>
        </authorList>
    </citation>
    <scope>SUBCELLULAR LOCATION [LARGE SCALE ANALYSIS]</scope>
</reference>